<organism>
    <name type="scientific">Staphylococcus aureus (strain MW2)</name>
    <dbReference type="NCBI Taxonomy" id="196620"/>
    <lineage>
        <taxon>Bacteria</taxon>
        <taxon>Bacillati</taxon>
        <taxon>Bacillota</taxon>
        <taxon>Bacilli</taxon>
        <taxon>Bacillales</taxon>
        <taxon>Staphylococcaceae</taxon>
        <taxon>Staphylococcus</taxon>
    </lineage>
</organism>
<feature type="chain" id="PRO_0000213184" description="Holin-like protein CidA">
    <location>
        <begin position="1"/>
        <end position="131"/>
    </location>
</feature>
<feature type="transmembrane region" description="Helical" evidence="1">
    <location>
        <begin position="7"/>
        <end position="25"/>
    </location>
</feature>
<feature type="transmembrane region" description="Helical" evidence="1">
    <location>
        <begin position="30"/>
        <end position="49"/>
    </location>
</feature>
<feature type="transmembrane region" description="Helical" evidence="1">
    <location>
        <begin position="62"/>
        <end position="82"/>
    </location>
</feature>
<feature type="transmembrane region" description="Helical" evidence="1">
    <location>
        <begin position="92"/>
        <end position="114"/>
    </location>
</feature>
<comment type="function">
    <text evidence="1">Increases the activity of extracellular murein hydrolases possibly by mediating their export via hole formation. Inhibited by the antiholin-like proteins LrgAB. In an unstressed cell, the LrgAB products probably inhibit the function of the CidAB proteins. When a cell is stressed by the addition of antibiotics or by other factors in the environment, the CidAB proteins possibly oligomerize within the bacterial cell membrane, creating lesions that disrupt the proton motive force, which in turn results in loss of cell viability. These lesions are also hypothesized to regulate the subsequent cell lysis by either allowing the murein hydrolases access to the cell wall substrate and/or regulating their activity by a possible change in the cell wall pH that results from loss of membrane potential.</text>
</comment>
<comment type="subcellular location">
    <subcellularLocation>
        <location evidence="1">Cell membrane</location>
        <topology evidence="1">Multi-pass membrane protein</topology>
    </subcellularLocation>
</comment>
<comment type="similarity">
    <text evidence="1">Belongs to the CidA/LrgA family. CidA subfamily.</text>
</comment>
<reference key="1">
    <citation type="journal article" date="2002" name="Lancet">
        <title>Genome and virulence determinants of high virulence community-acquired MRSA.</title>
        <authorList>
            <person name="Baba T."/>
            <person name="Takeuchi F."/>
            <person name="Kuroda M."/>
            <person name="Yuzawa H."/>
            <person name="Aoki K."/>
            <person name="Oguchi A."/>
            <person name="Nagai Y."/>
            <person name="Iwama N."/>
            <person name="Asano K."/>
            <person name="Naimi T."/>
            <person name="Kuroda H."/>
            <person name="Cui L."/>
            <person name="Yamamoto K."/>
            <person name="Hiramatsu K."/>
        </authorList>
    </citation>
    <scope>NUCLEOTIDE SEQUENCE [LARGE SCALE GENOMIC DNA]</scope>
    <source>
        <strain>MW2</strain>
    </source>
</reference>
<gene>
    <name evidence="1" type="primary">cidA</name>
    <name type="ordered locus">MW2462</name>
</gene>
<protein>
    <recommendedName>
        <fullName evidence="1">Holin-like protein CidA</fullName>
    </recommendedName>
</protein>
<dbReference type="EMBL" id="BA000033">
    <property type="protein sequence ID" value="BAB96327.1"/>
    <property type="molecule type" value="Genomic_DNA"/>
</dbReference>
<dbReference type="RefSeq" id="WP_000549734.1">
    <property type="nucleotide sequence ID" value="NC_003923.1"/>
</dbReference>
<dbReference type="SMR" id="P60648"/>
<dbReference type="KEGG" id="sam:MW2462"/>
<dbReference type="HOGENOM" id="CLU_113736_2_1_9"/>
<dbReference type="GO" id="GO:0005886">
    <property type="term" value="C:plasma membrane"/>
    <property type="evidence" value="ECO:0007669"/>
    <property type="project" value="UniProtKB-SubCell"/>
</dbReference>
<dbReference type="GO" id="GO:0019835">
    <property type="term" value="P:cytolysis"/>
    <property type="evidence" value="ECO:0007669"/>
    <property type="project" value="UniProtKB-UniRule"/>
</dbReference>
<dbReference type="GO" id="GO:0031640">
    <property type="term" value="P:killing of cells of another organism"/>
    <property type="evidence" value="ECO:0007669"/>
    <property type="project" value="UniProtKB-KW"/>
</dbReference>
<dbReference type="GO" id="GO:0012501">
    <property type="term" value="P:programmed cell death"/>
    <property type="evidence" value="ECO:0007669"/>
    <property type="project" value="UniProtKB-UniRule"/>
</dbReference>
<dbReference type="HAMAP" id="MF_01143">
    <property type="entry name" value="CidA"/>
    <property type="match status" value="1"/>
</dbReference>
<dbReference type="InterPro" id="IPR023760">
    <property type="entry name" value="Holin-like_CidA"/>
</dbReference>
<dbReference type="InterPro" id="IPR005538">
    <property type="entry name" value="LrgA/CidA"/>
</dbReference>
<dbReference type="PANTHER" id="PTHR33931:SF2">
    <property type="entry name" value="HOLIN-LIKE PROTEIN CIDA"/>
    <property type="match status" value="1"/>
</dbReference>
<dbReference type="PANTHER" id="PTHR33931">
    <property type="entry name" value="HOLIN-LIKE PROTEIN CIDA-RELATED"/>
    <property type="match status" value="1"/>
</dbReference>
<dbReference type="Pfam" id="PF03788">
    <property type="entry name" value="LrgA"/>
    <property type="match status" value="1"/>
</dbReference>
<sequence>MHKVQLIIKLLLQLGIIIVITYIGTEIQKIFHLPLAGSIVGLFLFYLLLQFKIVPLTWVEDGANFLLKTMVFFFIPSVVGIMDVASEITLNYILFFAVIIIGTCIVALSSGYIAEKMSVKHKHRKGVDAYE</sequence>
<name>CIDA_STAAW</name>
<accession>P60648</accession>
<accession>Q99R94</accession>
<keyword id="KW-1003">Cell membrane</keyword>
<keyword id="KW-0204">Cytolysis</keyword>
<keyword id="KW-0472">Membrane</keyword>
<keyword id="KW-0812">Transmembrane</keyword>
<keyword id="KW-1133">Transmembrane helix</keyword>
<evidence type="ECO:0000255" key="1">
    <source>
        <dbReference type="HAMAP-Rule" id="MF_01143"/>
    </source>
</evidence>
<proteinExistence type="inferred from homology"/>